<protein>
    <recommendedName>
        <fullName evidence="1">Peptidyl-tRNA hydrolase</fullName>
        <shortName evidence="1">Pth</shortName>
        <ecNumber evidence="1">3.1.1.29</ecNumber>
    </recommendedName>
</protein>
<feature type="chain" id="PRO_1000010663" description="Peptidyl-tRNA hydrolase">
    <location>
        <begin position="1"/>
        <end position="193"/>
    </location>
</feature>
<feature type="active site" description="Proton acceptor" evidence="1">
    <location>
        <position position="21"/>
    </location>
</feature>
<feature type="binding site" evidence="1">
    <location>
        <position position="16"/>
    </location>
    <ligand>
        <name>tRNA</name>
        <dbReference type="ChEBI" id="CHEBI:17843"/>
    </ligand>
</feature>
<feature type="binding site" evidence="1">
    <location>
        <position position="67"/>
    </location>
    <ligand>
        <name>tRNA</name>
        <dbReference type="ChEBI" id="CHEBI:17843"/>
    </ligand>
</feature>
<feature type="binding site" evidence="1">
    <location>
        <position position="69"/>
    </location>
    <ligand>
        <name>tRNA</name>
        <dbReference type="ChEBI" id="CHEBI:17843"/>
    </ligand>
</feature>
<feature type="binding site" evidence="1">
    <location>
        <position position="115"/>
    </location>
    <ligand>
        <name>tRNA</name>
        <dbReference type="ChEBI" id="CHEBI:17843"/>
    </ligand>
</feature>
<feature type="site" description="Discriminates between blocked and unblocked aminoacyl-tRNA" evidence="1">
    <location>
        <position position="11"/>
    </location>
</feature>
<feature type="site" description="Stabilizes the basic form of H active site to accept a proton" evidence="1">
    <location>
        <position position="94"/>
    </location>
</feature>
<dbReference type="EC" id="3.1.1.29" evidence="1"/>
<dbReference type="EMBL" id="AP009247">
    <property type="protein sequence ID" value="BAF62066.1"/>
    <property type="molecule type" value="Genomic_DNA"/>
</dbReference>
<dbReference type="RefSeq" id="WP_011930335.1">
    <property type="nucleotide sequence ID" value="NC_009465.1"/>
</dbReference>
<dbReference type="SMR" id="A5CVE8"/>
<dbReference type="STRING" id="412965.COSY_0967"/>
<dbReference type="KEGG" id="vok:COSY_0967"/>
<dbReference type="eggNOG" id="COG0193">
    <property type="taxonomic scope" value="Bacteria"/>
</dbReference>
<dbReference type="HOGENOM" id="CLU_062456_3_1_6"/>
<dbReference type="OrthoDB" id="9800507at2"/>
<dbReference type="Proteomes" id="UP000000247">
    <property type="component" value="Chromosome"/>
</dbReference>
<dbReference type="GO" id="GO:0005737">
    <property type="term" value="C:cytoplasm"/>
    <property type="evidence" value="ECO:0007669"/>
    <property type="project" value="UniProtKB-SubCell"/>
</dbReference>
<dbReference type="GO" id="GO:0004045">
    <property type="term" value="F:peptidyl-tRNA hydrolase activity"/>
    <property type="evidence" value="ECO:0007669"/>
    <property type="project" value="UniProtKB-UniRule"/>
</dbReference>
<dbReference type="GO" id="GO:0000049">
    <property type="term" value="F:tRNA binding"/>
    <property type="evidence" value="ECO:0007669"/>
    <property type="project" value="UniProtKB-UniRule"/>
</dbReference>
<dbReference type="GO" id="GO:0006515">
    <property type="term" value="P:protein quality control for misfolded or incompletely synthesized proteins"/>
    <property type="evidence" value="ECO:0007669"/>
    <property type="project" value="UniProtKB-UniRule"/>
</dbReference>
<dbReference type="GO" id="GO:0072344">
    <property type="term" value="P:rescue of stalled ribosome"/>
    <property type="evidence" value="ECO:0007669"/>
    <property type="project" value="UniProtKB-UniRule"/>
</dbReference>
<dbReference type="CDD" id="cd00462">
    <property type="entry name" value="PTH"/>
    <property type="match status" value="1"/>
</dbReference>
<dbReference type="FunFam" id="3.40.50.1470:FF:000001">
    <property type="entry name" value="Peptidyl-tRNA hydrolase"/>
    <property type="match status" value="1"/>
</dbReference>
<dbReference type="Gene3D" id="3.40.50.1470">
    <property type="entry name" value="Peptidyl-tRNA hydrolase"/>
    <property type="match status" value="1"/>
</dbReference>
<dbReference type="HAMAP" id="MF_00083">
    <property type="entry name" value="Pept_tRNA_hydro_bact"/>
    <property type="match status" value="1"/>
</dbReference>
<dbReference type="InterPro" id="IPR001328">
    <property type="entry name" value="Pept_tRNA_hydro"/>
</dbReference>
<dbReference type="InterPro" id="IPR018171">
    <property type="entry name" value="Pept_tRNA_hydro_CS"/>
</dbReference>
<dbReference type="InterPro" id="IPR036416">
    <property type="entry name" value="Pept_tRNA_hydro_sf"/>
</dbReference>
<dbReference type="NCBIfam" id="TIGR00447">
    <property type="entry name" value="pth"/>
    <property type="match status" value="1"/>
</dbReference>
<dbReference type="PANTHER" id="PTHR17224">
    <property type="entry name" value="PEPTIDYL-TRNA HYDROLASE"/>
    <property type="match status" value="1"/>
</dbReference>
<dbReference type="PANTHER" id="PTHR17224:SF1">
    <property type="entry name" value="PEPTIDYL-TRNA HYDROLASE"/>
    <property type="match status" value="1"/>
</dbReference>
<dbReference type="Pfam" id="PF01195">
    <property type="entry name" value="Pept_tRNA_hydro"/>
    <property type="match status" value="1"/>
</dbReference>
<dbReference type="SUPFAM" id="SSF53178">
    <property type="entry name" value="Peptidyl-tRNA hydrolase-like"/>
    <property type="match status" value="1"/>
</dbReference>
<dbReference type="PROSITE" id="PS01196">
    <property type="entry name" value="PEPT_TRNA_HYDROL_2"/>
    <property type="match status" value="1"/>
</dbReference>
<gene>
    <name evidence="1" type="primary">pth</name>
    <name type="ordered locus">COSY_0967</name>
</gene>
<name>PTH_VESOH</name>
<accession>A5CVE8</accession>
<keyword id="KW-0963">Cytoplasm</keyword>
<keyword id="KW-0378">Hydrolase</keyword>
<keyword id="KW-1185">Reference proteome</keyword>
<keyword id="KW-0694">RNA-binding</keyword>
<keyword id="KW-0820">tRNA-binding</keyword>
<organism>
    <name type="scientific">Vesicomyosocius okutanii subsp. Calyptogena okutanii (strain HA)</name>
    <dbReference type="NCBI Taxonomy" id="412965"/>
    <lineage>
        <taxon>Bacteria</taxon>
        <taxon>Pseudomonadati</taxon>
        <taxon>Pseudomonadota</taxon>
        <taxon>Gammaproteobacteria</taxon>
        <taxon>Candidatus Pseudothioglobaceae</taxon>
        <taxon>Candidatus Vesicomyosocius</taxon>
    </lineage>
</organism>
<comment type="function">
    <text evidence="1">Hydrolyzes ribosome-free peptidyl-tRNAs (with 1 or more amino acids incorporated), which drop off the ribosome during protein synthesis, or as a result of ribosome stalling.</text>
</comment>
<comment type="function">
    <text evidence="1">Catalyzes the release of premature peptidyl moieties from peptidyl-tRNA molecules trapped in stalled 50S ribosomal subunits, and thus maintains levels of free tRNAs and 50S ribosomes.</text>
</comment>
<comment type="catalytic activity">
    <reaction evidence="1">
        <text>an N-acyl-L-alpha-aminoacyl-tRNA + H2O = an N-acyl-L-amino acid + a tRNA + H(+)</text>
        <dbReference type="Rhea" id="RHEA:54448"/>
        <dbReference type="Rhea" id="RHEA-COMP:10123"/>
        <dbReference type="Rhea" id="RHEA-COMP:13883"/>
        <dbReference type="ChEBI" id="CHEBI:15377"/>
        <dbReference type="ChEBI" id="CHEBI:15378"/>
        <dbReference type="ChEBI" id="CHEBI:59874"/>
        <dbReference type="ChEBI" id="CHEBI:78442"/>
        <dbReference type="ChEBI" id="CHEBI:138191"/>
        <dbReference type="EC" id="3.1.1.29"/>
    </reaction>
</comment>
<comment type="subunit">
    <text evidence="1">Monomer.</text>
</comment>
<comment type="subcellular location">
    <subcellularLocation>
        <location evidence="1">Cytoplasm</location>
    </subcellularLocation>
</comment>
<comment type="similarity">
    <text evidence="1">Belongs to the PTH family.</text>
</comment>
<reference key="1">
    <citation type="journal article" date="2007" name="Curr. Biol.">
        <title>Reduced genome of the thioautotrophic intracellular symbiont in a deep-sea clam, Calyptogena okutanii.</title>
        <authorList>
            <person name="Kuwahara H."/>
            <person name="Yoshida T."/>
            <person name="Takaki Y."/>
            <person name="Shimamura S."/>
            <person name="Nishi S."/>
            <person name="Harada M."/>
            <person name="Matsuyama K."/>
            <person name="Takishita K."/>
            <person name="Kawato M."/>
            <person name="Uematsu K."/>
            <person name="Fujiwara Y."/>
            <person name="Sato T."/>
            <person name="Kato C."/>
            <person name="Kitagawa M."/>
            <person name="Kato I."/>
            <person name="Maruyama T."/>
        </authorList>
    </citation>
    <scope>NUCLEOTIDE SEQUENCE [LARGE SCALE GENOMIC DNA]</scope>
    <source>
        <strain>HA</strain>
    </source>
</reference>
<evidence type="ECO:0000255" key="1">
    <source>
        <dbReference type="HAMAP-Rule" id="MF_00083"/>
    </source>
</evidence>
<sequence length="193" mass="21725">MTIKLIVGLGNPGKNYKYHRHNVGFWFCDALAKLYAGNFKKRTKFFGEVTQINIFNHKIQLLKPTTFMNCSGQSIQSIANFYQINADEILIVHDELNINPGIAKIKSGGSHGGHNGLKNTIKILETKAFYRLRIGIGHPGNKLPIVDFVLNTPSKDELDKIQNALNNSLQVIEDVIKNNLDKVIKTLQKKEII</sequence>
<proteinExistence type="inferred from homology"/>